<protein>
    <recommendedName>
        <fullName evidence="1">UPF0122 protein SACOL1252</fullName>
    </recommendedName>
</protein>
<dbReference type="EMBL" id="CP000046">
    <property type="protein sequence ID" value="AAW38085.1"/>
    <property type="molecule type" value="Genomic_DNA"/>
</dbReference>
<dbReference type="RefSeq" id="WP_000531320.1">
    <property type="nucleotide sequence ID" value="NZ_JBGOFO010000002.1"/>
</dbReference>
<dbReference type="SMR" id="Q5HGJ6"/>
<dbReference type="KEGG" id="sac:SACOL1252"/>
<dbReference type="HOGENOM" id="CLU_129218_1_1_9"/>
<dbReference type="Proteomes" id="UP000000530">
    <property type="component" value="Chromosome"/>
</dbReference>
<dbReference type="Gene3D" id="1.10.10.10">
    <property type="entry name" value="Winged helix-like DNA-binding domain superfamily/Winged helix DNA-binding domain"/>
    <property type="match status" value="1"/>
</dbReference>
<dbReference type="HAMAP" id="MF_00245">
    <property type="entry name" value="UPF0122"/>
    <property type="match status" value="1"/>
</dbReference>
<dbReference type="InterPro" id="IPR013324">
    <property type="entry name" value="RNA_pol_sigma_r3/r4-like"/>
</dbReference>
<dbReference type="InterPro" id="IPR007394">
    <property type="entry name" value="UPF0122"/>
</dbReference>
<dbReference type="InterPro" id="IPR054831">
    <property type="entry name" value="UPF0122_fam_protein"/>
</dbReference>
<dbReference type="InterPro" id="IPR036388">
    <property type="entry name" value="WH-like_DNA-bd_sf"/>
</dbReference>
<dbReference type="NCBIfam" id="NF001067">
    <property type="entry name" value="PRK00118.1-2"/>
    <property type="match status" value="1"/>
</dbReference>
<dbReference type="NCBIfam" id="NF001070">
    <property type="entry name" value="PRK00118.1-6"/>
    <property type="match status" value="1"/>
</dbReference>
<dbReference type="NCBIfam" id="NF045758">
    <property type="entry name" value="YlxM"/>
    <property type="match status" value="1"/>
</dbReference>
<dbReference type="PANTHER" id="PTHR40083">
    <property type="entry name" value="UPF0122 PROTEIN CBO2450/CLC_2298"/>
    <property type="match status" value="1"/>
</dbReference>
<dbReference type="PANTHER" id="PTHR40083:SF1">
    <property type="entry name" value="UPF0122 PROTEIN YLXM"/>
    <property type="match status" value="1"/>
</dbReference>
<dbReference type="Pfam" id="PF04297">
    <property type="entry name" value="UPF0122"/>
    <property type="match status" value="1"/>
</dbReference>
<dbReference type="SUPFAM" id="SSF88659">
    <property type="entry name" value="Sigma3 and sigma4 domains of RNA polymerase sigma factors"/>
    <property type="match status" value="1"/>
</dbReference>
<reference key="1">
    <citation type="journal article" date="2005" name="J. Bacteriol.">
        <title>Insights on evolution of virulence and resistance from the complete genome analysis of an early methicillin-resistant Staphylococcus aureus strain and a biofilm-producing methicillin-resistant Staphylococcus epidermidis strain.</title>
        <authorList>
            <person name="Gill S.R."/>
            <person name="Fouts D.E."/>
            <person name="Archer G.L."/>
            <person name="Mongodin E.F."/>
            <person name="DeBoy R.T."/>
            <person name="Ravel J."/>
            <person name="Paulsen I.T."/>
            <person name="Kolonay J.F."/>
            <person name="Brinkac L.M."/>
            <person name="Beanan M.J."/>
            <person name="Dodson R.J."/>
            <person name="Daugherty S.C."/>
            <person name="Madupu R."/>
            <person name="Angiuoli S.V."/>
            <person name="Durkin A.S."/>
            <person name="Haft D.H."/>
            <person name="Vamathevan J.J."/>
            <person name="Khouri H."/>
            <person name="Utterback T.R."/>
            <person name="Lee C."/>
            <person name="Dimitrov G."/>
            <person name="Jiang L."/>
            <person name="Qin H."/>
            <person name="Weidman J."/>
            <person name="Tran K."/>
            <person name="Kang K.H."/>
            <person name="Hance I.R."/>
            <person name="Nelson K.E."/>
            <person name="Fraser C.M."/>
        </authorList>
    </citation>
    <scope>NUCLEOTIDE SEQUENCE [LARGE SCALE GENOMIC DNA]</scope>
    <source>
        <strain>COL</strain>
    </source>
</reference>
<organism>
    <name type="scientific">Staphylococcus aureus (strain COL)</name>
    <dbReference type="NCBI Taxonomy" id="93062"/>
    <lineage>
        <taxon>Bacteria</taxon>
        <taxon>Bacillati</taxon>
        <taxon>Bacillota</taxon>
        <taxon>Bacilli</taxon>
        <taxon>Bacillales</taxon>
        <taxon>Staphylococcaceae</taxon>
        <taxon>Staphylococcus</taxon>
    </lineage>
</organism>
<evidence type="ECO:0000255" key="1">
    <source>
        <dbReference type="HAMAP-Rule" id="MF_00245"/>
    </source>
</evidence>
<feature type="chain" id="PRO_0000211875" description="UPF0122 protein SACOL1252">
    <location>
        <begin position="1"/>
        <end position="110"/>
    </location>
</feature>
<name>Y1252_STAAC</name>
<proteinExistence type="inferred from homology"/>
<comment type="function">
    <text evidence="1">Might take part in the signal recognition particle (SRP) pathway. This is inferred from the conservation of its genetic proximity to ftsY/ffh. May be a regulatory protein.</text>
</comment>
<comment type="similarity">
    <text evidence="1">Belongs to the UPF0122 family.</text>
</comment>
<gene>
    <name type="ordered locus">SACOL1252</name>
</gene>
<accession>Q5HGJ6</accession>
<sequence>MGQNDLVKTLRMNYLFDFYQSLLTNKQRNYLELFYLEDYSLSEIADTFNVSRQAVYDNIRRTGDLVEDYEKKLELYQKFEQRREIYDEMKQHLSNPEQIQRYIQQLEDLE</sequence>